<accession>P57564</accession>
<reference key="1">
    <citation type="journal article" date="2000" name="Nature">
        <title>Genome sequence of the endocellular bacterial symbiont of aphids Buchnera sp. APS.</title>
        <authorList>
            <person name="Shigenobu S."/>
            <person name="Watanabe H."/>
            <person name="Hattori M."/>
            <person name="Sakaki Y."/>
            <person name="Ishikawa H."/>
        </authorList>
    </citation>
    <scope>NUCLEOTIDE SEQUENCE [LARGE SCALE GENOMIC DNA]</scope>
    <source>
        <strain>APS</strain>
    </source>
</reference>
<feature type="chain" id="PRO_0000082933" description="Methionyl-tRNA formyltransferase">
    <location>
        <begin position="1"/>
        <end position="314"/>
    </location>
</feature>
<feature type="binding site" evidence="1">
    <location>
        <begin position="112"/>
        <end position="115"/>
    </location>
    <ligand>
        <name>(6S)-5,6,7,8-tetrahydrofolate</name>
        <dbReference type="ChEBI" id="CHEBI:57453"/>
    </ligand>
</feature>
<organism>
    <name type="scientific">Buchnera aphidicola subsp. Acyrthosiphon pisum (strain APS)</name>
    <name type="common">Acyrthosiphon pisum symbiotic bacterium</name>
    <dbReference type="NCBI Taxonomy" id="107806"/>
    <lineage>
        <taxon>Bacteria</taxon>
        <taxon>Pseudomonadati</taxon>
        <taxon>Pseudomonadota</taxon>
        <taxon>Gammaproteobacteria</taxon>
        <taxon>Enterobacterales</taxon>
        <taxon>Erwiniaceae</taxon>
        <taxon>Buchnera</taxon>
    </lineage>
</organism>
<sequence>MKKLKIVFAGTEYFSAEHLHALITSSHDVISVITQPDRYSGRGQKITFSPVKILSLNNGIPIFQPENLNDTDFQNKLLKLNADIMTVVSYGKIIPKKILNMFSKGCINVHASLLPRWRGATPIQSSILHGDKKTGISIIQMNDEIDSGNIMHSITCSISSKDTTKTLSLKLIKIGIEALLEVLEKIILNTVIYKKQNEKNVILSKKIYKKDALLDWNLSAEKLERLIRAFNPWPICYFLSQNKNIKVWQSEVIPITQNNRSVGEIISYNKNGIQINTSHQILNIKKLQFPGKKIIDVKNVIISKKKLFKIGTIL</sequence>
<keyword id="KW-0648">Protein biosynthesis</keyword>
<keyword id="KW-1185">Reference proteome</keyword>
<keyword id="KW-0808">Transferase</keyword>
<name>FMT_BUCAI</name>
<comment type="function">
    <text evidence="1">Attaches a formyl group to the free amino group of methionyl-tRNA(fMet). The formyl group appears to play a dual role in the initiator identity of N-formylmethionyl-tRNA by promoting its recognition by IF2 and preventing the misappropriation of this tRNA by the elongation apparatus.</text>
</comment>
<comment type="catalytic activity">
    <reaction evidence="1">
        <text>L-methionyl-tRNA(fMet) + (6R)-10-formyltetrahydrofolate = N-formyl-L-methionyl-tRNA(fMet) + (6S)-5,6,7,8-tetrahydrofolate + H(+)</text>
        <dbReference type="Rhea" id="RHEA:24380"/>
        <dbReference type="Rhea" id="RHEA-COMP:9952"/>
        <dbReference type="Rhea" id="RHEA-COMP:9953"/>
        <dbReference type="ChEBI" id="CHEBI:15378"/>
        <dbReference type="ChEBI" id="CHEBI:57453"/>
        <dbReference type="ChEBI" id="CHEBI:78530"/>
        <dbReference type="ChEBI" id="CHEBI:78844"/>
        <dbReference type="ChEBI" id="CHEBI:195366"/>
        <dbReference type="EC" id="2.1.2.9"/>
    </reaction>
</comment>
<comment type="similarity">
    <text evidence="1 2">Belongs to the Fmt family.</text>
</comment>
<proteinExistence type="inferred from homology"/>
<protein>
    <recommendedName>
        <fullName evidence="1">Methionyl-tRNA formyltransferase</fullName>
        <ecNumber evidence="1">2.1.2.9</ecNumber>
    </recommendedName>
</protein>
<gene>
    <name evidence="1" type="primary">fmt</name>
    <name type="ordered locus">BU497</name>
</gene>
<dbReference type="EC" id="2.1.2.9" evidence="1"/>
<dbReference type="EMBL" id="BA000003">
    <property type="protein sequence ID" value="BAB13190.1"/>
    <property type="molecule type" value="Genomic_DNA"/>
</dbReference>
<dbReference type="RefSeq" id="NP_240304.1">
    <property type="nucleotide sequence ID" value="NC_002528.1"/>
</dbReference>
<dbReference type="RefSeq" id="WP_009874448.1">
    <property type="nucleotide sequence ID" value="NC_002528.1"/>
</dbReference>
<dbReference type="SMR" id="P57564"/>
<dbReference type="STRING" id="563178.BUAP5A_490"/>
<dbReference type="EnsemblBacteria" id="BAB13190">
    <property type="protein sequence ID" value="BAB13190"/>
    <property type="gene ID" value="BAB13190"/>
</dbReference>
<dbReference type="KEGG" id="buc:BU497"/>
<dbReference type="PATRIC" id="fig|107806.10.peg.502"/>
<dbReference type="eggNOG" id="COG0223">
    <property type="taxonomic scope" value="Bacteria"/>
</dbReference>
<dbReference type="HOGENOM" id="CLU_033347_1_2_6"/>
<dbReference type="Proteomes" id="UP000001806">
    <property type="component" value="Chromosome"/>
</dbReference>
<dbReference type="GO" id="GO:0005829">
    <property type="term" value="C:cytosol"/>
    <property type="evidence" value="ECO:0007669"/>
    <property type="project" value="TreeGrafter"/>
</dbReference>
<dbReference type="GO" id="GO:0004479">
    <property type="term" value="F:methionyl-tRNA formyltransferase activity"/>
    <property type="evidence" value="ECO:0007669"/>
    <property type="project" value="UniProtKB-UniRule"/>
</dbReference>
<dbReference type="CDD" id="cd08646">
    <property type="entry name" value="FMT_core_Met-tRNA-FMT_N"/>
    <property type="match status" value="1"/>
</dbReference>
<dbReference type="CDD" id="cd08704">
    <property type="entry name" value="Met_tRNA_FMT_C"/>
    <property type="match status" value="1"/>
</dbReference>
<dbReference type="Gene3D" id="3.10.25.10">
    <property type="entry name" value="Formyl transferase, C-terminal domain"/>
    <property type="match status" value="1"/>
</dbReference>
<dbReference type="Gene3D" id="3.40.50.170">
    <property type="entry name" value="Formyl transferase, N-terminal domain"/>
    <property type="match status" value="1"/>
</dbReference>
<dbReference type="HAMAP" id="MF_00182">
    <property type="entry name" value="Formyl_trans"/>
    <property type="match status" value="1"/>
</dbReference>
<dbReference type="InterPro" id="IPR005794">
    <property type="entry name" value="Fmt"/>
</dbReference>
<dbReference type="InterPro" id="IPR005793">
    <property type="entry name" value="Formyl_trans_C"/>
</dbReference>
<dbReference type="InterPro" id="IPR037022">
    <property type="entry name" value="Formyl_trans_C_sf"/>
</dbReference>
<dbReference type="InterPro" id="IPR002376">
    <property type="entry name" value="Formyl_transf_N"/>
</dbReference>
<dbReference type="InterPro" id="IPR036477">
    <property type="entry name" value="Formyl_transf_N_sf"/>
</dbReference>
<dbReference type="InterPro" id="IPR011034">
    <property type="entry name" value="Formyl_transferase-like_C_sf"/>
</dbReference>
<dbReference type="InterPro" id="IPR044135">
    <property type="entry name" value="Met-tRNA-FMT_C"/>
</dbReference>
<dbReference type="InterPro" id="IPR041711">
    <property type="entry name" value="Met-tRNA-FMT_N"/>
</dbReference>
<dbReference type="NCBIfam" id="TIGR00460">
    <property type="entry name" value="fmt"/>
    <property type="match status" value="1"/>
</dbReference>
<dbReference type="PANTHER" id="PTHR11138">
    <property type="entry name" value="METHIONYL-TRNA FORMYLTRANSFERASE"/>
    <property type="match status" value="1"/>
</dbReference>
<dbReference type="PANTHER" id="PTHR11138:SF5">
    <property type="entry name" value="METHIONYL-TRNA FORMYLTRANSFERASE, MITOCHONDRIAL"/>
    <property type="match status" value="1"/>
</dbReference>
<dbReference type="Pfam" id="PF02911">
    <property type="entry name" value="Formyl_trans_C"/>
    <property type="match status" value="1"/>
</dbReference>
<dbReference type="Pfam" id="PF00551">
    <property type="entry name" value="Formyl_trans_N"/>
    <property type="match status" value="1"/>
</dbReference>
<dbReference type="SUPFAM" id="SSF50486">
    <property type="entry name" value="FMT C-terminal domain-like"/>
    <property type="match status" value="1"/>
</dbReference>
<dbReference type="SUPFAM" id="SSF53328">
    <property type="entry name" value="Formyltransferase"/>
    <property type="match status" value="1"/>
</dbReference>
<evidence type="ECO:0000255" key="1">
    <source>
        <dbReference type="HAMAP-Rule" id="MF_00182"/>
    </source>
</evidence>
<evidence type="ECO:0000305" key="2"/>